<evidence type="ECO:0000255" key="1"/>
<evidence type="ECO:0000269" key="2">
    <source>
    </source>
</evidence>
<evidence type="ECO:0000269" key="3">
    <source>
    </source>
</evidence>
<evidence type="ECO:0000269" key="4">
    <source>
    </source>
</evidence>
<evidence type="ECO:0000269" key="5">
    <source>
    </source>
</evidence>
<evidence type="ECO:0000269" key="6">
    <source>
    </source>
</evidence>
<evidence type="ECO:0000269" key="7">
    <source>
    </source>
</evidence>
<evidence type="ECO:0000303" key="8">
    <source>
    </source>
</evidence>
<evidence type="ECO:0000305" key="9">
    <source>
    </source>
</evidence>
<evidence type="ECO:0000305" key="10">
    <source>
    </source>
</evidence>
<feature type="chain" id="PRO_0000451231" description="PR-toxin biosynthesis cluster protein 7">
    <location>
        <begin position="1"/>
        <end position="186"/>
    </location>
</feature>
<feature type="transmembrane region" description="Helical" evidence="1">
    <location>
        <begin position="24"/>
        <end position="43"/>
    </location>
</feature>
<reference key="1">
    <citation type="journal article" date="2014" name="Nat. Commun.">
        <title>Multiple recent horizontal transfers of a large genomic region in cheese making fungi.</title>
        <authorList>
            <person name="Cheeseman K."/>
            <person name="Ropars J."/>
            <person name="Renault P."/>
            <person name="Dupont J."/>
            <person name="Gouzy J."/>
            <person name="Branca A."/>
            <person name="Abraham A.-L."/>
            <person name="Ceppi M."/>
            <person name="Conseiller E."/>
            <person name="Debuchy R."/>
            <person name="Malagnac F."/>
            <person name="Goarin A."/>
            <person name="Silar P."/>
            <person name="Lacoste S."/>
            <person name="Sallet E."/>
            <person name="Bensimon A."/>
            <person name="Giraud T."/>
            <person name="Brygoo Y."/>
        </authorList>
    </citation>
    <scope>NUCLEOTIDE SEQUENCE [LARGE SCALE GENOMIC DNA]</scope>
    <source>
        <strain>FM164</strain>
    </source>
</reference>
<reference key="2">
    <citation type="journal article" date="1980" name="Appl. Environ. Microbiol.">
        <title>Production of eremofortins A, B, and C relative to formation of PR toxin by Penicillium roqueforti.</title>
        <authorList>
            <person name="Moreau S."/>
            <person name="Lablache-Combier A."/>
            <person name="Biguet J."/>
        </authorList>
    </citation>
    <scope>FUNCTION</scope>
</reference>
<reference key="3">
    <citation type="journal article" date="1993" name="J. Biol. Chem.">
        <title>Aristolochene synthase. Isolation, characterization, and bacterial expression of a sesquiterpenoid biosynthetic gene (Ari1) from Penicillium roqueforti.</title>
        <authorList>
            <person name="Proctor R.H."/>
            <person name="Hohn T.M."/>
        </authorList>
    </citation>
    <scope>FUNCTION</scope>
</reference>
<reference key="4">
    <citation type="journal article" date="2004" name="J. Am. Chem. Soc.">
        <title>Aristolochene synthase: mechanistic analysis of active site residues by site-directed mutagenesis.</title>
        <authorList>
            <person name="Felicetti B."/>
            <person name="Cane D.E."/>
        </authorList>
    </citation>
    <scope>FUNCTION</scope>
</reference>
<reference key="5">
    <citation type="journal article" date="2014" name="Fungal Genet. Biol.">
        <title>Molecular characterization of the PR-toxin gene cluster in Penicillium roqueforti and Penicillium chrysogenum: cross talk of secondary metabolite pathways.</title>
        <authorList>
            <person name="Hidalgo P.I."/>
            <person name="Ullan R.V."/>
            <person name="Albillos S.M."/>
            <person name="Montero O."/>
            <person name="Fernandez-Bodega M.A."/>
            <person name="Garcia-Estrada C."/>
            <person name="Fernandez-Aguado M."/>
            <person name="Martin J.F."/>
        </authorList>
    </citation>
    <scope>FUNCTION</scope>
</reference>
<reference key="6">
    <citation type="journal article" date="2015" name="Angew. Chem. Int. Ed.">
        <title>Identification of intermediates in the biosynthesis of PR toxin by Penicillium roqueforti.</title>
        <authorList>
            <person name="Riclea R."/>
            <person name="Dickschat J.S."/>
        </authorList>
    </citation>
    <scope>FUNCTION</scope>
</reference>
<reference key="7">
    <citation type="journal article" date="2017" name="Appl. Microbiol. Biotechnol.">
        <title>Penicillium roqueforti PR toxin gene cluster characterization.</title>
        <authorList>
            <person name="Hidalgo P.I."/>
            <person name="Poirier E."/>
            <person name="Ullan R.V."/>
            <person name="Piqueras J."/>
            <person name="Meslet-Cladiere L."/>
            <person name="Coton E."/>
            <person name="Coton M."/>
        </authorList>
    </citation>
    <scope>FUNCTION</scope>
    <scope>PATHWAY</scope>
</reference>
<protein>
    <recommendedName>
        <fullName evidence="8">PR-toxin biosynthesis cluster protein 7</fullName>
    </recommendedName>
</protein>
<proteinExistence type="inferred from homology"/>
<keyword id="KW-0472">Membrane</keyword>
<keyword id="KW-1185">Reference proteome</keyword>
<keyword id="KW-0812">Transmembrane</keyword>
<keyword id="KW-1133">Transmembrane helix</keyword>
<gene>
    <name evidence="8" type="primary">ORF7</name>
    <name type="ORF">PROQFM164_S02g001470</name>
</gene>
<dbReference type="EMBL" id="HG792016">
    <property type="protein sequence ID" value="CDM31320.1"/>
    <property type="molecule type" value="Genomic_DNA"/>
</dbReference>
<dbReference type="SMR" id="W6Q4S2"/>
<dbReference type="OMA" id="AWLNWAC"/>
<dbReference type="OrthoDB" id="2544694at2759"/>
<dbReference type="Proteomes" id="UP000030686">
    <property type="component" value="Unassembled WGS sequence"/>
</dbReference>
<dbReference type="GO" id="GO:0016020">
    <property type="term" value="C:membrane"/>
    <property type="evidence" value="ECO:0007669"/>
    <property type="project" value="UniProtKB-SubCell"/>
</dbReference>
<dbReference type="Gene3D" id="2.40.160.20">
    <property type="match status" value="1"/>
</dbReference>
<dbReference type="Pfam" id="PF11578">
    <property type="entry name" value="DUF3237"/>
    <property type="match status" value="1"/>
</dbReference>
<name>ORF7_PENRF</name>
<comment type="function">
    <text evidence="2 3 4 5 6 7">Part of the gene cluster that mediates the biosynthesis of PR-toxin, a bicyclic sesquiterpene belonging to the eremophilane class and acting as a mycotoxin (PubMed:24239699, PubMed:27921136). The first step of the pathway is catalyzed by the aristolochene synthase which performs the cyclization of trans,trans-farnesyl diphosphate (FPP) to the bicyclic sesquiterpene aristolochene (PubMed:15186158, PubMed:24239699, PubMed:8440737). Following the formation of aristolochene, the non-oxygenated aristolochene is converted to the trioxygenated intermediate eremofortin B, via 7-epi-neopetasone (PubMed:24239699, PubMed:26274339). This conversion appears to involve three enzymes, a hydroxysterol oxidase-like enzyme, the quinone-oxidase prx3 that forms the quinone-type-structure in the bicyclic nucleus of aristolochene with the C8-oxo group and the C-3 hydroxyl group, and the P450 monooxygenase ORF6 that introduces the epoxide at the double bond between carbons 1 and 2 (PubMed:24239699, PubMed:27921136). No monoxy or dioxy-intermediates have been reported to be released to the broth, so these three early oxidative reactions may be coupled together (PubMed:24239699). Eremofortin B is further oxidized by another P450 monooxygenase, that introduces a second epoxide between carbons 7 and 11 prior to acetylation to eremofortin A by the acetyltransferase ORF8 (PubMed:16345540, PubMed:24239699, PubMed:27921136). The second epoxidation may be performed by a second P450 monooxygenase (PubMed:24239699). After the acetylation step, eremofortin A is converted to eremofortin C and then to PR-toxin (PubMed:24239699). First the conversion of eremofortin A to eremofortin C proceeds by oxidation of the side chain of the molecule at C-12 and is catalyzed by the short-chain oxidoreductase prx1 (PubMed:16345540, PubMed:24239699). The cytochrome P450 monooxygenase ORF6 is probably also involved in this step (PubMed:27921136). The primary alcohol formed at C-12 is finally oxidized by the short-chain alcohol dehydrogenase prx4 that forms PR-toxin (PubMed:16345540, PubMed:24239699).</text>
</comment>
<comment type="pathway">
    <text evidence="9 10">Sesquiterpene biosynthesis.</text>
</comment>
<comment type="subcellular location">
    <subcellularLocation>
        <location evidence="1">Membrane</location>
        <topology evidence="1">Single-pass membrane protein</topology>
    </subcellularLocation>
</comment>
<sequence length="186" mass="20808">MEPQTKDPDPLPRLVHIGEIQFNLGEVTTGGVTPRGTFIFCPITGGHFTTVFPLPDGFGIHSEAIEGLRAEVLPGGGDYPLIHNNELAELNVSVVAKGLNNDHIFRITSFGICEWNKLIFDMMGQTAAARSTEMGEINAWQVFRINTDSPEYAWLNWACIIGQERLIYEDSRMAKTHMKLFQFLVK</sequence>
<accession>W6Q4S2</accession>
<organism>
    <name type="scientific">Penicillium roqueforti (strain FM164)</name>
    <dbReference type="NCBI Taxonomy" id="1365484"/>
    <lineage>
        <taxon>Eukaryota</taxon>
        <taxon>Fungi</taxon>
        <taxon>Dikarya</taxon>
        <taxon>Ascomycota</taxon>
        <taxon>Pezizomycotina</taxon>
        <taxon>Eurotiomycetes</taxon>
        <taxon>Eurotiomycetidae</taxon>
        <taxon>Eurotiales</taxon>
        <taxon>Aspergillaceae</taxon>
        <taxon>Penicillium</taxon>
    </lineage>
</organism>